<sequence length="242" mass="25670">MSLTLLPAVDVRDGKAVRLRQGESGSETDYGSPLDAARTWVDAGAQWIHLVDLDAAFGTGDNRAQLREIVRQLGDKVNIEMSGGVRDDASLDAALDAGAARVNIGTAALENPEWTARVIDKYGDKVAVGLDVRGHTLAARGWVKEGGGLFETMRFLDDAGCSRYVVTDVTRDGMMSGPNIDLLREVAERTDARVTASGGISKLDDLRAIKELLPLGVDSAILGKSLYAGAFTLEEALAVANA</sequence>
<name>HIS4_BIFA0</name>
<comment type="catalytic activity">
    <reaction evidence="1">
        <text>1-(5-phospho-beta-D-ribosyl)-5-[(5-phospho-beta-D-ribosylamino)methylideneamino]imidazole-4-carboxamide = 5-[(5-phospho-1-deoxy-D-ribulos-1-ylimino)methylamino]-1-(5-phospho-beta-D-ribosyl)imidazole-4-carboxamide</text>
        <dbReference type="Rhea" id="RHEA:15469"/>
        <dbReference type="ChEBI" id="CHEBI:58435"/>
        <dbReference type="ChEBI" id="CHEBI:58525"/>
        <dbReference type="EC" id="5.3.1.16"/>
    </reaction>
</comment>
<comment type="pathway">
    <text evidence="1">Amino-acid biosynthesis; L-histidine biosynthesis; L-histidine from 5-phospho-alpha-D-ribose 1-diphosphate: step 4/9.</text>
</comment>
<comment type="subcellular location">
    <subcellularLocation>
        <location evidence="1">Cytoplasm</location>
    </subcellularLocation>
</comment>
<comment type="similarity">
    <text evidence="1">Belongs to the HisA/HisF family.</text>
</comment>
<organism>
    <name type="scientific">Bifidobacterium animalis subsp. lactis (strain AD011)</name>
    <dbReference type="NCBI Taxonomy" id="442563"/>
    <lineage>
        <taxon>Bacteria</taxon>
        <taxon>Bacillati</taxon>
        <taxon>Actinomycetota</taxon>
        <taxon>Actinomycetes</taxon>
        <taxon>Bifidobacteriales</taxon>
        <taxon>Bifidobacteriaceae</taxon>
        <taxon>Bifidobacterium</taxon>
    </lineage>
</organism>
<keyword id="KW-0028">Amino-acid biosynthesis</keyword>
<keyword id="KW-0963">Cytoplasm</keyword>
<keyword id="KW-0368">Histidine biosynthesis</keyword>
<keyword id="KW-0413">Isomerase</keyword>
<keyword id="KW-1185">Reference proteome</keyword>
<reference key="1">
    <citation type="journal article" date="2009" name="J. Bacteriol.">
        <title>Genome sequence of the probiotic bacterium Bifidobacterium animalis subsp. lactis AD011.</title>
        <authorList>
            <person name="Kim J.F."/>
            <person name="Jeong H."/>
            <person name="Yu D.S."/>
            <person name="Choi S.-H."/>
            <person name="Hur C.-G."/>
            <person name="Park M.-S."/>
            <person name="Yoon S.H."/>
            <person name="Kim D.-W."/>
            <person name="Ji G.E."/>
            <person name="Park H.-S."/>
            <person name="Oh T.K."/>
        </authorList>
    </citation>
    <scope>NUCLEOTIDE SEQUENCE [LARGE SCALE GENOMIC DNA]</scope>
    <source>
        <strain>AD011</strain>
    </source>
</reference>
<protein>
    <recommendedName>
        <fullName evidence="1">1-(5-phosphoribosyl)-5-[(5-phosphoribosylamino)methylideneamino] imidazole-4-carboxamide isomerase</fullName>
        <ecNumber evidence="1">5.3.1.16</ecNumber>
    </recommendedName>
    <alternativeName>
        <fullName evidence="1">Phosphoribosylformimino-5-aminoimidazole carboxamide ribotide isomerase</fullName>
    </alternativeName>
</protein>
<gene>
    <name evidence="1" type="primary">hisA</name>
    <name type="ordered locus">BLA_0798</name>
</gene>
<dbReference type="EC" id="5.3.1.16" evidence="1"/>
<dbReference type="EMBL" id="CP001213">
    <property type="protein sequence ID" value="ACL29090.1"/>
    <property type="molecule type" value="Genomic_DNA"/>
</dbReference>
<dbReference type="SMR" id="B8DSW1"/>
<dbReference type="STRING" id="442563.BLA_0798"/>
<dbReference type="KEGG" id="bla:BLA_0798"/>
<dbReference type="HOGENOM" id="CLU_048577_1_1_11"/>
<dbReference type="UniPathway" id="UPA00031">
    <property type="reaction ID" value="UER00009"/>
</dbReference>
<dbReference type="Proteomes" id="UP000002456">
    <property type="component" value="Chromosome"/>
</dbReference>
<dbReference type="GO" id="GO:0005737">
    <property type="term" value="C:cytoplasm"/>
    <property type="evidence" value="ECO:0007669"/>
    <property type="project" value="UniProtKB-SubCell"/>
</dbReference>
<dbReference type="GO" id="GO:0003949">
    <property type="term" value="F:1-(5-phosphoribosyl)-5-[(5-phosphoribosylamino)methylideneamino]imidazole-4-carboxamide isomerase activity"/>
    <property type="evidence" value="ECO:0007669"/>
    <property type="project" value="UniProtKB-UniRule"/>
</dbReference>
<dbReference type="GO" id="GO:0004640">
    <property type="term" value="F:phosphoribosylanthranilate isomerase activity"/>
    <property type="evidence" value="ECO:0007669"/>
    <property type="project" value="InterPro"/>
</dbReference>
<dbReference type="GO" id="GO:0000105">
    <property type="term" value="P:L-histidine biosynthetic process"/>
    <property type="evidence" value="ECO:0007669"/>
    <property type="project" value="UniProtKB-UniRule"/>
</dbReference>
<dbReference type="GO" id="GO:0000162">
    <property type="term" value="P:L-tryptophan biosynthetic process"/>
    <property type="evidence" value="ECO:0007669"/>
    <property type="project" value="InterPro"/>
</dbReference>
<dbReference type="CDD" id="cd04732">
    <property type="entry name" value="HisA"/>
    <property type="match status" value="1"/>
</dbReference>
<dbReference type="FunFam" id="3.20.20.70:FF:000009">
    <property type="entry name" value="1-(5-phosphoribosyl)-5-[(5-phosphoribosylamino)methylideneamino] imidazole-4-carboxamide isomerase"/>
    <property type="match status" value="1"/>
</dbReference>
<dbReference type="Gene3D" id="3.20.20.70">
    <property type="entry name" value="Aldolase class I"/>
    <property type="match status" value="1"/>
</dbReference>
<dbReference type="HAMAP" id="MF_01014">
    <property type="entry name" value="HisA"/>
    <property type="match status" value="1"/>
</dbReference>
<dbReference type="InterPro" id="IPR013785">
    <property type="entry name" value="Aldolase_TIM"/>
</dbReference>
<dbReference type="InterPro" id="IPR006062">
    <property type="entry name" value="His_biosynth"/>
</dbReference>
<dbReference type="InterPro" id="IPR010188">
    <property type="entry name" value="HisA/PriA_Actinobacteria"/>
</dbReference>
<dbReference type="InterPro" id="IPR044524">
    <property type="entry name" value="Isoase_HisA-like"/>
</dbReference>
<dbReference type="InterPro" id="IPR023016">
    <property type="entry name" value="Isoase_HisA-like_bact"/>
</dbReference>
<dbReference type="InterPro" id="IPR011060">
    <property type="entry name" value="RibuloseP-bd_barrel"/>
</dbReference>
<dbReference type="NCBIfam" id="TIGR01919">
    <property type="entry name" value="hisA-trpF"/>
    <property type="match status" value="1"/>
</dbReference>
<dbReference type="PANTHER" id="PTHR43090">
    <property type="entry name" value="1-(5-PHOSPHORIBOSYL)-5-[(5-PHOSPHORIBOSYLAMINO)METHYLIDENEAMINO] IMIDAZOLE-4-CARBOXAMIDE ISOMERASE"/>
    <property type="match status" value="1"/>
</dbReference>
<dbReference type="PANTHER" id="PTHR43090:SF2">
    <property type="entry name" value="1-(5-PHOSPHORIBOSYL)-5-[(5-PHOSPHORIBOSYLAMINO)METHYLIDENEAMINO] IMIDAZOLE-4-CARBOXAMIDE ISOMERASE"/>
    <property type="match status" value="1"/>
</dbReference>
<dbReference type="Pfam" id="PF00977">
    <property type="entry name" value="His_biosynth"/>
    <property type="match status" value="1"/>
</dbReference>
<dbReference type="SUPFAM" id="SSF51366">
    <property type="entry name" value="Ribulose-phoshate binding barrel"/>
    <property type="match status" value="1"/>
</dbReference>
<evidence type="ECO:0000255" key="1">
    <source>
        <dbReference type="HAMAP-Rule" id="MF_01014"/>
    </source>
</evidence>
<proteinExistence type="inferred from homology"/>
<accession>B8DSW1</accession>
<feature type="chain" id="PRO_1000148953" description="1-(5-phosphoribosyl)-5-[(5-phosphoribosylamino)methylideneamino] imidazole-4-carboxamide isomerase">
    <location>
        <begin position="1"/>
        <end position="242"/>
    </location>
</feature>
<feature type="active site" description="Proton acceptor" evidence="1">
    <location>
        <position position="10"/>
    </location>
</feature>
<feature type="active site" description="Proton donor" evidence="1">
    <location>
        <position position="131"/>
    </location>
</feature>